<protein>
    <recommendedName>
        <fullName evidence="1">Serine--tRNA ligase</fullName>
        <ecNumber evidence="1">6.1.1.11</ecNumber>
    </recommendedName>
    <alternativeName>
        <fullName evidence="1">Seryl-tRNA synthetase</fullName>
        <shortName evidence="1">SerRS</shortName>
    </alternativeName>
    <alternativeName>
        <fullName evidence="1">Seryl-tRNA(Ser/Sec) synthetase</fullName>
    </alternativeName>
</protein>
<comment type="function">
    <text evidence="1">Catalyzes the attachment of serine to tRNA(Ser). Is also able to aminoacylate tRNA(Sec) with serine, to form the misacylated tRNA L-seryl-tRNA(Sec), which will be further converted into selenocysteinyl-tRNA(Sec).</text>
</comment>
<comment type="catalytic activity">
    <reaction evidence="1">
        <text>tRNA(Ser) + L-serine + ATP = L-seryl-tRNA(Ser) + AMP + diphosphate + H(+)</text>
        <dbReference type="Rhea" id="RHEA:12292"/>
        <dbReference type="Rhea" id="RHEA-COMP:9669"/>
        <dbReference type="Rhea" id="RHEA-COMP:9703"/>
        <dbReference type="ChEBI" id="CHEBI:15378"/>
        <dbReference type="ChEBI" id="CHEBI:30616"/>
        <dbReference type="ChEBI" id="CHEBI:33019"/>
        <dbReference type="ChEBI" id="CHEBI:33384"/>
        <dbReference type="ChEBI" id="CHEBI:78442"/>
        <dbReference type="ChEBI" id="CHEBI:78533"/>
        <dbReference type="ChEBI" id="CHEBI:456215"/>
        <dbReference type="EC" id="6.1.1.11"/>
    </reaction>
</comment>
<comment type="catalytic activity">
    <reaction evidence="1">
        <text>tRNA(Sec) + L-serine + ATP = L-seryl-tRNA(Sec) + AMP + diphosphate + H(+)</text>
        <dbReference type="Rhea" id="RHEA:42580"/>
        <dbReference type="Rhea" id="RHEA-COMP:9742"/>
        <dbReference type="Rhea" id="RHEA-COMP:10128"/>
        <dbReference type="ChEBI" id="CHEBI:15378"/>
        <dbReference type="ChEBI" id="CHEBI:30616"/>
        <dbReference type="ChEBI" id="CHEBI:33019"/>
        <dbReference type="ChEBI" id="CHEBI:33384"/>
        <dbReference type="ChEBI" id="CHEBI:78442"/>
        <dbReference type="ChEBI" id="CHEBI:78533"/>
        <dbReference type="ChEBI" id="CHEBI:456215"/>
        <dbReference type="EC" id="6.1.1.11"/>
    </reaction>
</comment>
<comment type="pathway">
    <text evidence="1">Aminoacyl-tRNA biosynthesis; selenocysteinyl-tRNA(Sec) biosynthesis; L-seryl-tRNA(Sec) from L-serine and tRNA(Sec): step 1/1.</text>
</comment>
<comment type="subunit">
    <text evidence="1">Homodimer. The tRNA molecule binds across the dimer.</text>
</comment>
<comment type="subcellular location">
    <subcellularLocation>
        <location evidence="1">Cytoplasm</location>
    </subcellularLocation>
</comment>
<comment type="domain">
    <text evidence="1">Consists of two distinct domains, a catalytic core and a N-terminal extension that is involved in tRNA binding.</text>
</comment>
<comment type="similarity">
    <text evidence="1">Belongs to the class-II aminoacyl-tRNA synthetase family. Type-1 seryl-tRNA synthetase subfamily.</text>
</comment>
<evidence type="ECO:0000255" key="1">
    <source>
        <dbReference type="HAMAP-Rule" id="MF_00176"/>
    </source>
</evidence>
<gene>
    <name evidence="1" type="primary">serS</name>
    <name type="ordered locus">BALH_0013</name>
</gene>
<sequence length="424" mass="48744">MLDIKFLRTNFEEVKAKLQHRGEDLTDFGRFEELDTRRRELLVQTEELKSKRNEVSQQISVLKREKKDAEALILEMREVGEKVKDLDNELRTVEEDLERLMLSIPNIPHESAPVGETEDDNVVARTWGEVKEFAFEPKPHWDLATDLGILDFERAGKVTGSRFVFYKGAGARLERALISFMLDLHTDEHGYEEVLPPYMVNRASMTGTGQLPKFEEDAFRIESEDYFLIPTAEVPVTNMHRDEILNKEQLPIRYAAFSSCFRSEAGSAGRDTRGLIRQHQFNKVELVKFVKPEDSYEELEKLTNDAERVLQLLELPYRVMSMCTGDLGFTAAKKYDIEVWIPSYGTYREISSCSNFEAFQARRANIRFRREPNGKPEHVHTLNGSGLAIGRTVAAILENYQQEDGTIIIPEVLRPYMGGKTVIK</sequence>
<organism>
    <name type="scientific">Bacillus thuringiensis (strain Al Hakam)</name>
    <dbReference type="NCBI Taxonomy" id="412694"/>
    <lineage>
        <taxon>Bacteria</taxon>
        <taxon>Bacillati</taxon>
        <taxon>Bacillota</taxon>
        <taxon>Bacilli</taxon>
        <taxon>Bacillales</taxon>
        <taxon>Bacillaceae</taxon>
        <taxon>Bacillus</taxon>
        <taxon>Bacillus cereus group</taxon>
    </lineage>
</organism>
<accession>A0R891</accession>
<keyword id="KW-0030">Aminoacyl-tRNA synthetase</keyword>
<keyword id="KW-0067">ATP-binding</keyword>
<keyword id="KW-0963">Cytoplasm</keyword>
<keyword id="KW-0436">Ligase</keyword>
<keyword id="KW-0547">Nucleotide-binding</keyword>
<keyword id="KW-0648">Protein biosynthesis</keyword>
<dbReference type="EC" id="6.1.1.11" evidence="1"/>
<dbReference type="EMBL" id="CP000485">
    <property type="protein sequence ID" value="ABK83434.1"/>
    <property type="molecule type" value="Genomic_DNA"/>
</dbReference>
<dbReference type="RefSeq" id="WP_000884181.1">
    <property type="nucleotide sequence ID" value="NC_008600.1"/>
</dbReference>
<dbReference type="SMR" id="A0R891"/>
<dbReference type="GeneID" id="69534454"/>
<dbReference type="KEGG" id="btl:BALH_0013"/>
<dbReference type="HOGENOM" id="CLU_023797_1_1_9"/>
<dbReference type="UniPathway" id="UPA00906">
    <property type="reaction ID" value="UER00895"/>
</dbReference>
<dbReference type="GO" id="GO:0005737">
    <property type="term" value="C:cytoplasm"/>
    <property type="evidence" value="ECO:0007669"/>
    <property type="project" value="UniProtKB-SubCell"/>
</dbReference>
<dbReference type="GO" id="GO:0005524">
    <property type="term" value="F:ATP binding"/>
    <property type="evidence" value="ECO:0007669"/>
    <property type="project" value="UniProtKB-UniRule"/>
</dbReference>
<dbReference type="GO" id="GO:0140096">
    <property type="term" value="F:catalytic activity, acting on a protein"/>
    <property type="evidence" value="ECO:0007669"/>
    <property type="project" value="UniProtKB-ARBA"/>
</dbReference>
<dbReference type="GO" id="GO:0004828">
    <property type="term" value="F:serine-tRNA ligase activity"/>
    <property type="evidence" value="ECO:0007669"/>
    <property type="project" value="UniProtKB-UniRule"/>
</dbReference>
<dbReference type="GO" id="GO:0016740">
    <property type="term" value="F:transferase activity"/>
    <property type="evidence" value="ECO:0007669"/>
    <property type="project" value="UniProtKB-ARBA"/>
</dbReference>
<dbReference type="GO" id="GO:0016260">
    <property type="term" value="P:selenocysteine biosynthetic process"/>
    <property type="evidence" value="ECO:0007669"/>
    <property type="project" value="UniProtKB-UniRule"/>
</dbReference>
<dbReference type="GO" id="GO:0006434">
    <property type="term" value="P:seryl-tRNA aminoacylation"/>
    <property type="evidence" value="ECO:0007669"/>
    <property type="project" value="UniProtKB-UniRule"/>
</dbReference>
<dbReference type="CDD" id="cd00770">
    <property type="entry name" value="SerRS_core"/>
    <property type="match status" value="1"/>
</dbReference>
<dbReference type="Gene3D" id="3.30.930.10">
    <property type="entry name" value="Bira Bifunctional Protein, Domain 2"/>
    <property type="match status" value="1"/>
</dbReference>
<dbReference type="Gene3D" id="1.10.287.40">
    <property type="entry name" value="Serine-tRNA synthetase, tRNA binding domain"/>
    <property type="match status" value="1"/>
</dbReference>
<dbReference type="HAMAP" id="MF_00176">
    <property type="entry name" value="Ser_tRNA_synth_type1"/>
    <property type="match status" value="1"/>
</dbReference>
<dbReference type="InterPro" id="IPR002314">
    <property type="entry name" value="aa-tRNA-synt_IIb"/>
</dbReference>
<dbReference type="InterPro" id="IPR006195">
    <property type="entry name" value="aa-tRNA-synth_II"/>
</dbReference>
<dbReference type="InterPro" id="IPR045864">
    <property type="entry name" value="aa-tRNA-synth_II/BPL/LPL"/>
</dbReference>
<dbReference type="InterPro" id="IPR002317">
    <property type="entry name" value="Ser-tRNA-ligase_type_1"/>
</dbReference>
<dbReference type="InterPro" id="IPR015866">
    <property type="entry name" value="Ser-tRNA-synth_1_N"/>
</dbReference>
<dbReference type="InterPro" id="IPR042103">
    <property type="entry name" value="SerRS_1_N_sf"/>
</dbReference>
<dbReference type="InterPro" id="IPR033729">
    <property type="entry name" value="SerRS_core"/>
</dbReference>
<dbReference type="InterPro" id="IPR010978">
    <property type="entry name" value="tRNA-bd_arm"/>
</dbReference>
<dbReference type="NCBIfam" id="TIGR00414">
    <property type="entry name" value="serS"/>
    <property type="match status" value="1"/>
</dbReference>
<dbReference type="PANTHER" id="PTHR43697:SF1">
    <property type="entry name" value="SERINE--TRNA LIGASE"/>
    <property type="match status" value="1"/>
</dbReference>
<dbReference type="PANTHER" id="PTHR43697">
    <property type="entry name" value="SERYL-TRNA SYNTHETASE"/>
    <property type="match status" value="1"/>
</dbReference>
<dbReference type="Pfam" id="PF02403">
    <property type="entry name" value="Seryl_tRNA_N"/>
    <property type="match status" value="1"/>
</dbReference>
<dbReference type="Pfam" id="PF00587">
    <property type="entry name" value="tRNA-synt_2b"/>
    <property type="match status" value="1"/>
</dbReference>
<dbReference type="PIRSF" id="PIRSF001529">
    <property type="entry name" value="Ser-tRNA-synth_IIa"/>
    <property type="match status" value="1"/>
</dbReference>
<dbReference type="PRINTS" id="PR00981">
    <property type="entry name" value="TRNASYNTHSER"/>
</dbReference>
<dbReference type="SUPFAM" id="SSF55681">
    <property type="entry name" value="Class II aaRS and biotin synthetases"/>
    <property type="match status" value="1"/>
</dbReference>
<dbReference type="SUPFAM" id="SSF46589">
    <property type="entry name" value="tRNA-binding arm"/>
    <property type="match status" value="1"/>
</dbReference>
<dbReference type="PROSITE" id="PS50862">
    <property type="entry name" value="AA_TRNA_LIGASE_II"/>
    <property type="match status" value="1"/>
</dbReference>
<proteinExistence type="inferred from homology"/>
<feature type="chain" id="PRO_1000019616" description="Serine--tRNA ligase">
    <location>
        <begin position="1"/>
        <end position="424"/>
    </location>
</feature>
<feature type="binding site" evidence="1">
    <location>
        <begin position="231"/>
        <end position="233"/>
    </location>
    <ligand>
        <name>L-serine</name>
        <dbReference type="ChEBI" id="CHEBI:33384"/>
    </ligand>
</feature>
<feature type="binding site" evidence="1">
    <location>
        <begin position="262"/>
        <end position="264"/>
    </location>
    <ligand>
        <name>ATP</name>
        <dbReference type="ChEBI" id="CHEBI:30616"/>
    </ligand>
</feature>
<feature type="binding site" evidence="1">
    <location>
        <position position="285"/>
    </location>
    <ligand>
        <name>L-serine</name>
        <dbReference type="ChEBI" id="CHEBI:33384"/>
    </ligand>
</feature>
<feature type="binding site" evidence="1">
    <location>
        <begin position="349"/>
        <end position="352"/>
    </location>
    <ligand>
        <name>ATP</name>
        <dbReference type="ChEBI" id="CHEBI:30616"/>
    </ligand>
</feature>
<feature type="binding site" evidence="1">
    <location>
        <position position="385"/>
    </location>
    <ligand>
        <name>L-serine</name>
        <dbReference type="ChEBI" id="CHEBI:33384"/>
    </ligand>
</feature>
<reference key="1">
    <citation type="journal article" date="2007" name="J. Bacteriol.">
        <title>The complete genome sequence of Bacillus thuringiensis Al Hakam.</title>
        <authorList>
            <person name="Challacombe J.F."/>
            <person name="Altherr M.R."/>
            <person name="Xie G."/>
            <person name="Bhotika S.S."/>
            <person name="Brown N."/>
            <person name="Bruce D."/>
            <person name="Campbell C.S."/>
            <person name="Campbell M.L."/>
            <person name="Chen J."/>
            <person name="Chertkov O."/>
            <person name="Cleland C."/>
            <person name="Dimitrijevic M."/>
            <person name="Doggett N.A."/>
            <person name="Fawcett J.J."/>
            <person name="Glavina T."/>
            <person name="Goodwin L.A."/>
            <person name="Green L.D."/>
            <person name="Han C.S."/>
            <person name="Hill K.K."/>
            <person name="Hitchcock P."/>
            <person name="Jackson P.J."/>
            <person name="Keim P."/>
            <person name="Kewalramani A.R."/>
            <person name="Longmire J."/>
            <person name="Lucas S."/>
            <person name="Malfatti S."/>
            <person name="Martinez D."/>
            <person name="McMurry K."/>
            <person name="Meincke L.J."/>
            <person name="Misra M."/>
            <person name="Moseman B.L."/>
            <person name="Mundt M."/>
            <person name="Munk A.C."/>
            <person name="Okinaka R.T."/>
            <person name="Parson-Quintana B."/>
            <person name="Reilly L.P."/>
            <person name="Richardson P."/>
            <person name="Robinson D.L."/>
            <person name="Saunders E."/>
            <person name="Tapia R."/>
            <person name="Tesmer J.G."/>
            <person name="Thayer N."/>
            <person name="Thompson L.S."/>
            <person name="Tice H."/>
            <person name="Ticknor L.O."/>
            <person name="Wills P.L."/>
            <person name="Gilna P."/>
            <person name="Brettin T.S."/>
        </authorList>
    </citation>
    <scope>NUCLEOTIDE SEQUENCE [LARGE SCALE GENOMIC DNA]</scope>
    <source>
        <strain>Al Hakam</strain>
    </source>
</reference>
<name>SYS_BACAH</name>